<dbReference type="EMBL" id="U38538">
    <property type="protein sequence ID" value="AAB60317.1"/>
    <property type="molecule type" value="Genomic_DNA"/>
</dbReference>
<dbReference type="EMBL" id="Z72884">
    <property type="protein sequence ID" value="CAA97102.1"/>
    <property type="molecule type" value="Genomic_DNA"/>
</dbReference>
<dbReference type="EMBL" id="BK006941">
    <property type="protein sequence ID" value="DAA08192.1"/>
    <property type="molecule type" value="Genomic_DNA"/>
</dbReference>
<dbReference type="PIR" id="S64404">
    <property type="entry name" value="S64404"/>
</dbReference>
<dbReference type="RefSeq" id="NP_011613.3">
    <property type="nucleotide sequence ID" value="NM_001181228.3"/>
</dbReference>
<dbReference type="PDB" id="3O4Z">
    <property type="method" value="X-ray"/>
    <property type="resolution" value="3.10 A"/>
    <property type="chains" value="A/B/C/D=1-386, A/B/C/D=428-688"/>
</dbReference>
<dbReference type="PDBsum" id="3O4Z"/>
<dbReference type="SMR" id="P53038"/>
<dbReference type="BioGRID" id="33342">
    <property type="interactions" value="558"/>
</dbReference>
<dbReference type="ComplexPortal" id="CPX-1422">
    <property type="entry name" value="TEL2-TTI1-TTI2 complex"/>
</dbReference>
<dbReference type="DIP" id="DIP-1245N"/>
<dbReference type="FunCoup" id="P53038">
    <property type="interactions" value="47"/>
</dbReference>
<dbReference type="IntAct" id="P53038">
    <property type="interactions" value="10"/>
</dbReference>
<dbReference type="MINT" id="P53038"/>
<dbReference type="STRING" id="4932.YGR099W"/>
<dbReference type="iPTMnet" id="P53038"/>
<dbReference type="PaxDb" id="4932-YGR099W"/>
<dbReference type="PeptideAtlas" id="P53038"/>
<dbReference type="EnsemblFungi" id="YGR099W_mRNA">
    <property type="protein sequence ID" value="YGR099W"/>
    <property type="gene ID" value="YGR099W"/>
</dbReference>
<dbReference type="GeneID" id="852991"/>
<dbReference type="KEGG" id="sce:YGR099W"/>
<dbReference type="AGR" id="SGD:S000003331"/>
<dbReference type="SGD" id="S000003331">
    <property type="gene designation" value="TEL2"/>
</dbReference>
<dbReference type="VEuPathDB" id="FungiDB:YGR099W"/>
<dbReference type="eggNOG" id="KOG4346">
    <property type="taxonomic scope" value="Eukaryota"/>
</dbReference>
<dbReference type="GeneTree" id="ENSGT00390000006698"/>
<dbReference type="HOGENOM" id="CLU_444244_0_0_1"/>
<dbReference type="InParanoid" id="P53038"/>
<dbReference type="OMA" id="ERTMFIA"/>
<dbReference type="OrthoDB" id="10258062at2759"/>
<dbReference type="BioCyc" id="YEAST:G3O-30809-MONOMER"/>
<dbReference type="BioGRID-ORCS" id="852991">
    <property type="hits" value="2 hits in 10 CRISPR screens"/>
</dbReference>
<dbReference type="EvolutionaryTrace" id="P53038"/>
<dbReference type="PRO" id="PR:P53038"/>
<dbReference type="Proteomes" id="UP000002311">
    <property type="component" value="Chromosome VII"/>
</dbReference>
<dbReference type="RNAct" id="P53038">
    <property type="molecule type" value="protein"/>
</dbReference>
<dbReference type="GO" id="GO:0000781">
    <property type="term" value="C:chromosome, telomeric region"/>
    <property type="evidence" value="ECO:0000314"/>
    <property type="project" value="SGD"/>
</dbReference>
<dbReference type="GO" id="GO:0005829">
    <property type="term" value="C:cytosol"/>
    <property type="evidence" value="ECO:0000318"/>
    <property type="project" value="GO_Central"/>
</dbReference>
<dbReference type="GO" id="GO:0005634">
    <property type="term" value="C:nucleus"/>
    <property type="evidence" value="ECO:0000303"/>
    <property type="project" value="ComplexPortal"/>
</dbReference>
<dbReference type="GO" id="GO:0110078">
    <property type="term" value="C:TTT Hsp90 cochaperone complex"/>
    <property type="evidence" value="ECO:0000353"/>
    <property type="project" value="ComplexPortal"/>
</dbReference>
<dbReference type="GO" id="GO:0051879">
    <property type="term" value="F:Hsp90 protein binding"/>
    <property type="evidence" value="ECO:0000318"/>
    <property type="project" value="GO_Central"/>
</dbReference>
<dbReference type="GO" id="GO:0042162">
    <property type="term" value="F:telomeric DNA binding"/>
    <property type="evidence" value="ECO:0000314"/>
    <property type="project" value="SGD"/>
</dbReference>
<dbReference type="GO" id="GO:0051083">
    <property type="term" value="P:'de novo' cotranslational protein folding"/>
    <property type="evidence" value="ECO:0000318"/>
    <property type="project" value="GO_Central"/>
</dbReference>
<dbReference type="GO" id="GO:2000003">
    <property type="term" value="P:positive regulation of DNA damage checkpoint"/>
    <property type="evidence" value="ECO:0000303"/>
    <property type="project" value="ComplexPortal"/>
</dbReference>
<dbReference type="GO" id="GO:0034502">
    <property type="term" value="P:protein localization to chromosome"/>
    <property type="evidence" value="ECO:0000315"/>
    <property type="project" value="SGD"/>
</dbReference>
<dbReference type="GO" id="GO:0050821">
    <property type="term" value="P:protein stabilization"/>
    <property type="evidence" value="ECO:0000303"/>
    <property type="project" value="ComplexPortal"/>
</dbReference>
<dbReference type="GO" id="GO:0000723">
    <property type="term" value="P:telomere maintenance"/>
    <property type="evidence" value="ECO:0000315"/>
    <property type="project" value="SGD"/>
</dbReference>
<dbReference type="GO" id="GO:0007004">
    <property type="term" value="P:telomere maintenance via telomerase"/>
    <property type="evidence" value="ECO:0000315"/>
    <property type="project" value="SGD"/>
</dbReference>
<dbReference type="FunFam" id="1.25.40.720:FF:000006">
    <property type="entry name" value="Telomere binding protein"/>
    <property type="match status" value="1"/>
</dbReference>
<dbReference type="FunFam" id="1.25.40.720:FF:000005">
    <property type="entry name" value="Telomere length regulation protein TEL2"/>
    <property type="match status" value="1"/>
</dbReference>
<dbReference type="Gene3D" id="1.25.40.720">
    <property type="entry name" value="Telomere length regulation protein 2, C-terminal domain"/>
    <property type="match status" value="2"/>
</dbReference>
<dbReference type="InterPro" id="IPR038528">
    <property type="entry name" value="TEL2_C_sf"/>
</dbReference>
<dbReference type="InterPro" id="IPR051970">
    <property type="entry name" value="TEL2_Regulation"/>
</dbReference>
<dbReference type="InterPro" id="IPR019337">
    <property type="entry name" value="Telomere_length_regulation_dom"/>
</dbReference>
<dbReference type="PANTHER" id="PTHR15830">
    <property type="entry name" value="TELOMERE LENGTH REGULATION PROTEIN TEL2 FAMILY MEMBER"/>
    <property type="match status" value="1"/>
</dbReference>
<dbReference type="PANTHER" id="PTHR15830:SF10">
    <property type="entry name" value="TELOMERE LENGTH REGULATION PROTEIN TEL2 HOMOLOG"/>
    <property type="match status" value="1"/>
</dbReference>
<dbReference type="Pfam" id="PF10193">
    <property type="entry name" value="Telomere_reg-2"/>
    <property type="match status" value="1"/>
</dbReference>
<accession>P53038</accession>
<accession>D6VUN1</accession>
<sequence length="688" mass="78687">MVLETLKQGLDSSQIHEALIQLDSYPREPVDLDASMVLIKFVIPVYPSLPERSKVILRRLASKSFTFLCQIVTFSRTISGRDGLQEIRIYQEILEDIISFEPGCLTFYLKASTTSKADRDSIKALFFGSKLFNVLANRIDMAKYLGYLRLQWKFLLESNETDPPGFLGEWLVSSFLLNPVLAADMLLGELFLLKESYFFSFQKIISASSLIDQKRLIAKFLLPYIQVIVTLENLNDVRKILRRFDLDKIISLSVLFEIQSLPLKEVIVRLMSNHSSTKFVSALVSKFADFTDEEVDTKTCELLVLFAVHNLNHSQREEIAHDERFLNGVTKHLGSNEREARERAMFIAKLLSGGHLKYESDFKINIPNVKFESNSDDKIIDFQSLKNPSICNTQTDVGKDKITEVSGHVQSLTLDCSDSDDEDENDEREIVKRIVFLKDLMKEYEKTGESRKAPLIPLLKQTVKLIRQKADFQLEVGYYAQGILSSIVCLNNEFDEPLFEQWRINALTSILVVLPEKVNGAINILFNSELSLQQRMSLLSALGLSARELRGLDDPTIVKPKFDFPTNRLPWDDQSHHNSRLVEVQESTSMIKKTKTVWKSRKLGKDREKGTQNRFRKYAGLFFYPLAHGWLNGIDVGTYNQLFKSHYLTTLRIIYSCANPVHDFESMTELMNHIISSAIEEGISLNKG</sequence>
<reference key="1">
    <citation type="journal article" date="1996" name="Mol. Cell. Biol.">
        <title>TEL2, an essential gene required for telomere length regulation and telomere position effect in Saccharomyces cerevisiae.</title>
        <authorList>
            <person name="Runge K.W."/>
            <person name="Zakian V.A."/>
        </authorList>
    </citation>
    <scope>NUCLEOTIDE SEQUENCE [GENOMIC DNA]</scope>
</reference>
<reference key="2">
    <citation type="journal article" date="1997" name="Nature">
        <title>The nucleotide sequence of Saccharomyces cerevisiae chromosome VII.</title>
        <authorList>
            <person name="Tettelin H."/>
            <person name="Agostoni-Carbone M.L."/>
            <person name="Albermann K."/>
            <person name="Albers M."/>
            <person name="Arroyo J."/>
            <person name="Backes U."/>
            <person name="Barreiros T."/>
            <person name="Bertani I."/>
            <person name="Bjourson A.J."/>
            <person name="Brueckner M."/>
            <person name="Bruschi C.V."/>
            <person name="Carignani G."/>
            <person name="Castagnoli L."/>
            <person name="Cerdan E."/>
            <person name="Clemente M.L."/>
            <person name="Coblenz A."/>
            <person name="Coglievina M."/>
            <person name="Coissac E."/>
            <person name="Defoor E."/>
            <person name="Del Bino S."/>
            <person name="Delius H."/>
            <person name="Delneri D."/>
            <person name="de Wergifosse P."/>
            <person name="Dujon B."/>
            <person name="Durand P."/>
            <person name="Entian K.-D."/>
            <person name="Eraso P."/>
            <person name="Escribano V."/>
            <person name="Fabiani L."/>
            <person name="Fartmann B."/>
            <person name="Feroli F."/>
            <person name="Feuermann M."/>
            <person name="Frontali L."/>
            <person name="Garcia-Gonzalez M."/>
            <person name="Garcia-Saez M.I."/>
            <person name="Goffeau A."/>
            <person name="Guerreiro P."/>
            <person name="Hani J."/>
            <person name="Hansen M."/>
            <person name="Hebling U."/>
            <person name="Hernandez K."/>
            <person name="Heumann K."/>
            <person name="Hilger F."/>
            <person name="Hofmann B."/>
            <person name="Indge K.J."/>
            <person name="James C.M."/>
            <person name="Klima R."/>
            <person name="Koetter P."/>
            <person name="Kramer B."/>
            <person name="Kramer W."/>
            <person name="Lauquin G."/>
            <person name="Leuther H."/>
            <person name="Louis E.J."/>
            <person name="Maillier E."/>
            <person name="Marconi A."/>
            <person name="Martegani E."/>
            <person name="Mazon M.J."/>
            <person name="Mazzoni C."/>
            <person name="McReynolds A.D.K."/>
            <person name="Melchioretto P."/>
            <person name="Mewes H.-W."/>
            <person name="Minenkova O."/>
            <person name="Mueller-Auer S."/>
            <person name="Nawrocki A."/>
            <person name="Netter P."/>
            <person name="Neu R."/>
            <person name="Nombela C."/>
            <person name="Oliver S.G."/>
            <person name="Panzeri L."/>
            <person name="Paoluzi S."/>
            <person name="Plevani P."/>
            <person name="Portetelle D."/>
            <person name="Portillo F."/>
            <person name="Potier S."/>
            <person name="Purnelle B."/>
            <person name="Rieger M."/>
            <person name="Riles L."/>
            <person name="Rinaldi T."/>
            <person name="Robben J."/>
            <person name="Rodrigues-Pousada C."/>
            <person name="Rodriguez-Belmonte E."/>
            <person name="Rodriguez-Torres A.M."/>
            <person name="Rose M."/>
            <person name="Ruzzi M."/>
            <person name="Saliola M."/>
            <person name="Sanchez-Perez M."/>
            <person name="Schaefer B."/>
            <person name="Schaefer M."/>
            <person name="Scharfe M."/>
            <person name="Schmidheini T."/>
            <person name="Schreer A."/>
            <person name="Skala J."/>
            <person name="Souciet J.-L."/>
            <person name="Steensma H.Y."/>
            <person name="Talla E."/>
            <person name="Thierry A."/>
            <person name="Vandenbol M."/>
            <person name="van der Aart Q.J.M."/>
            <person name="Van Dyck L."/>
            <person name="Vanoni M."/>
            <person name="Verhasselt P."/>
            <person name="Voet M."/>
            <person name="Volckaert G."/>
            <person name="Wambutt R."/>
            <person name="Watson M.D."/>
            <person name="Weber N."/>
            <person name="Wedler E."/>
            <person name="Wedler H."/>
            <person name="Wipfli P."/>
            <person name="Wolf K."/>
            <person name="Wright L.F."/>
            <person name="Zaccaria P."/>
            <person name="Zimmermann M."/>
            <person name="Zollner A."/>
            <person name="Kleine K."/>
        </authorList>
    </citation>
    <scope>NUCLEOTIDE SEQUENCE [LARGE SCALE GENOMIC DNA]</scope>
    <source>
        <strain>ATCC 204508 / S288c</strain>
    </source>
</reference>
<reference key="3">
    <citation type="journal article" date="2014" name="G3 (Bethesda)">
        <title>The reference genome sequence of Saccharomyces cerevisiae: Then and now.</title>
        <authorList>
            <person name="Engel S.R."/>
            <person name="Dietrich F.S."/>
            <person name="Fisk D.G."/>
            <person name="Binkley G."/>
            <person name="Balakrishnan R."/>
            <person name="Costanzo M.C."/>
            <person name="Dwight S.S."/>
            <person name="Hitz B.C."/>
            <person name="Karra K."/>
            <person name="Nash R.S."/>
            <person name="Weng S."/>
            <person name="Wong E.D."/>
            <person name="Lloyd P."/>
            <person name="Skrzypek M.S."/>
            <person name="Miyasato S.R."/>
            <person name="Simison M."/>
            <person name="Cherry J.M."/>
        </authorList>
    </citation>
    <scope>GENOME REANNOTATION</scope>
    <source>
        <strain>ATCC 204508 / S288c</strain>
    </source>
</reference>
<reference key="4">
    <citation type="journal article" date="2003" name="Nature">
        <title>Global analysis of protein expression in yeast.</title>
        <authorList>
            <person name="Ghaemmaghami S."/>
            <person name="Huh W.-K."/>
            <person name="Bower K."/>
            <person name="Howson R.W."/>
            <person name="Belle A."/>
            <person name="Dephoure N."/>
            <person name="O'Shea E.K."/>
            <person name="Weissman J.S."/>
        </authorList>
    </citation>
    <scope>LEVEL OF PROTEIN EXPRESSION [LARGE SCALE ANALYSIS]</scope>
</reference>
<reference key="5">
    <citation type="journal article" date="2009" name="Science">
        <title>Global analysis of Cdk1 substrate phosphorylation sites provides insights into evolution.</title>
        <authorList>
            <person name="Holt L.J."/>
            <person name="Tuch B.B."/>
            <person name="Villen J."/>
            <person name="Johnson A.D."/>
            <person name="Gygi S.P."/>
            <person name="Morgan D.O."/>
        </authorList>
    </citation>
    <scope>PHOSPHORYLATION [LARGE SCALE ANALYSIS] AT SER-417 AND SER-419</scope>
    <scope>IDENTIFICATION BY MASS SPECTROMETRY [LARGE SCALE ANALYSIS]</scope>
</reference>
<reference key="6">
    <citation type="journal article" date="2010" name="Genes Dev.">
        <title>Tel2 structure and function in the Hsp90-dependent maturation of mTOR and ATR complexes.</title>
        <authorList>
            <person name="Takai H."/>
            <person name="Xie Y."/>
            <person name="de Lange T."/>
            <person name="Pavletich N.P."/>
        </authorList>
    </citation>
    <scope>X-RAY CRYSTALLOGRAPHY (3.1 ANGSTROMS)</scope>
    <scope>INTERACTION WITH TTI1 AND TTI2</scope>
    <scope>MUTAGENESIS OF LEU-333; 333-LEU--MET-345 AND MET-345</scope>
</reference>
<organism>
    <name type="scientific">Saccharomyces cerevisiae (strain ATCC 204508 / S288c)</name>
    <name type="common">Baker's yeast</name>
    <dbReference type="NCBI Taxonomy" id="559292"/>
    <lineage>
        <taxon>Eukaryota</taxon>
        <taxon>Fungi</taxon>
        <taxon>Dikarya</taxon>
        <taxon>Ascomycota</taxon>
        <taxon>Saccharomycotina</taxon>
        <taxon>Saccharomycetes</taxon>
        <taxon>Saccharomycetales</taxon>
        <taxon>Saccharomycetaceae</taxon>
        <taxon>Saccharomyces</taxon>
    </lineage>
</organism>
<proteinExistence type="evidence at protein level"/>
<keyword id="KW-0002">3D-structure</keyword>
<keyword id="KW-0158">Chromosome</keyword>
<keyword id="KW-0238">DNA-binding</keyword>
<keyword id="KW-0539">Nucleus</keyword>
<keyword id="KW-0597">Phosphoprotein</keyword>
<keyword id="KW-1185">Reference proteome</keyword>
<keyword id="KW-0779">Telomere</keyword>
<comment type="function">
    <text evidence="1">Part of the TTT complex that is required to stabilize protein levels of the phosphatidylinositol 3-kinase-related protein kinase (PIKK) family proteins (By similarity). Required for telomere length regulation and telomere position effect. Regulates telomere length and participates in gene silencing at subtelomeric regions. Binds to telomeric DNA repeats.</text>
</comment>
<comment type="subunit">
    <text evidence="3">Component of the TTT complex composed of TEL2, TTI1 and TTI2. Interacts with TTI1 and TTI2.</text>
</comment>
<comment type="subcellular location">
    <subcellularLocation>
        <location evidence="4">Nucleus</location>
    </subcellularLocation>
    <subcellularLocation>
        <location evidence="4">Chromosome</location>
        <location evidence="4">Telomere</location>
    </subcellularLocation>
</comment>
<comment type="miscellaneous">
    <text evidence="2">Present with 638 molecules/cell in log phase SD medium.</text>
</comment>
<comment type="similarity">
    <text evidence="4">Belongs to the TEL2 family.</text>
</comment>
<name>TEL2_YEAST</name>
<protein>
    <recommendedName>
        <fullName>Telomere length regulation protein TEL2</fullName>
    </recommendedName>
</protein>
<gene>
    <name type="primary">TEL2</name>
    <name type="ordered locus">YGR099W</name>
</gene>
<evidence type="ECO:0000250" key="1"/>
<evidence type="ECO:0000269" key="2">
    <source>
    </source>
</evidence>
<evidence type="ECO:0000269" key="3">
    <source>
    </source>
</evidence>
<evidence type="ECO:0000305" key="4"/>
<evidence type="ECO:0007744" key="5">
    <source>
    </source>
</evidence>
<evidence type="ECO:0007829" key="6">
    <source>
        <dbReference type="PDB" id="3O4Z"/>
    </source>
</evidence>
<feature type="chain" id="PRO_0000215561" description="Telomere length regulation protein TEL2">
    <location>
        <begin position="1"/>
        <end position="688"/>
    </location>
</feature>
<feature type="modified residue" description="Phosphoserine" evidence="5">
    <location>
        <position position="417"/>
    </location>
</feature>
<feature type="modified residue" description="Phosphoserine" evidence="5">
    <location>
        <position position="419"/>
    </location>
</feature>
<feature type="sequence variant" description="In TEL2-1; short telomere length.">
    <original>S</original>
    <variation>R</variation>
    <location>
        <position position="129"/>
    </location>
</feature>
<feature type="mutagenesis site" description="Does not inhibit interaction with TTI1 or TTI2. Inhibits interaction with TTI1 or TTI2; when associated with E-345." evidence="3">
    <original>L</original>
    <variation>Q</variation>
    <location>
        <position position="333"/>
    </location>
</feature>
<feature type="mutagenesis site" description="Does not inhibit weakly interaction with TTI1 or TTI2. Inhibits interaction with TTI1 or TTI2; when associated with Q-333." evidence="3">
    <original>M</original>
    <variation>E</variation>
    <location>
        <position position="345"/>
    </location>
</feature>
<feature type="sequence conflict" description="In Ref. 1; AAB60317." evidence="4" ref="1">
    <original>Q</original>
    <variation>P</variation>
    <location>
        <position position="226"/>
    </location>
</feature>
<feature type="helix" evidence="6">
    <location>
        <begin position="2"/>
        <end position="5"/>
    </location>
</feature>
<feature type="turn" evidence="6">
    <location>
        <begin position="6"/>
        <end position="8"/>
    </location>
</feature>
<feature type="helix" evidence="6">
    <location>
        <begin position="12"/>
        <end position="23"/>
    </location>
</feature>
<feature type="helix" evidence="6">
    <location>
        <begin position="32"/>
        <end position="41"/>
    </location>
</feature>
<feature type="helix" evidence="6">
    <location>
        <begin position="43"/>
        <end position="45"/>
    </location>
</feature>
<feature type="turn" evidence="6">
    <location>
        <begin position="46"/>
        <end position="48"/>
    </location>
</feature>
<feature type="helix" evidence="6">
    <location>
        <begin position="51"/>
        <end position="64"/>
    </location>
</feature>
<feature type="helix" evidence="6">
    <location>
        <begin position="66"/>
        <end position="77"/>
    </location>
</feature>
<feature type="helix" evidence="6">
    <location>
        <begin position="85"/>
        <end position="100"/>
    </location>
</feature>
<feature type="helix" evidence="6">
    <location>
        <begin position="104"/>
        <end position="111"/>
    </location>
</feature>
<feature type="helix" evidence="6">
    <location>
        <begin position="116"/>
        <end position="126"/>
    </location>
</feature>
<feature type="helix" evidence="6">
    <location>
        <begin position="130"/>
        <end position="135"/>
    </location>
</feature>
<feature type="turn" evidence="6">
    <location>
        <begin position="136"/>
        <end position="138"/>
    </location>
</feature>
<feature type="helix" evidence="6">
    <location>
        <begin position="141"/>
        <end position="157"/>
    </location>
</feature>
<feature type="helix" evidence="6">
    <location>
        <begin position="166"/>
        <end position="177"/>
    </location>
</feature>
<feature type="helix" evidence="6">
    <location>
        <begin position="179"/>
        <end position="186"/>
    </location>
</feature>
<feature type="helix" evidence="6">
    <location>
        <begin position="187"/>
        <end position="191"/>
    </location>
</feature>
<feature type="helix" evidence="6">
    <location>
        <begin position="195"/>
        <end position="206"/>
    </location>
</feature>
<feature type="helix" evidence="6">
    <location>
        <begin position="210"/>
        <end position="218"/>
    </location>
</feature>
<feature type="helix" evidence="6">
    <location>
        <begin position="221"/>
        <end position="228"/>
    </location>
</feature>
<feature type="helix" evidence="6">
    <location>
        <begin position="231"/>
        <end position="241"/>
    </location>
</feature>
<feature type="helix" evidence="6">
    <location>
        <begin position="246"/>
        <end position="249"/>
    </location>
</feature>
<feature type="helix" evidence="6">
    <location>
        <begin position="252"/>
        <end position="257"/>
    </location>
</feature>
<feature type="helix" evidence="6">
    <location>
        <begin position="261"/>
        <end position="268"/>
    </location>
</feature>
<feature type="helix" evidence="6">
    <location>
        <begin position="273"/>
        <end position="288"/>
    </location>
</feature>
<feature type="helix" evidence="6">
    <location>
        <begin position="293"/>
        <end position="309"/>
    </location>
</feature>
<feature type="helix" evidence="6">
    <location>
        <begin position="313"/>
        <end position="320"/>
    </location>
</feature>
<feature type="helix" evidence="6">
    <location>
        <begin position="323"/>
        <end position="333"/>
    </location>
</feature>
<feature type="helix" evidence="6">
    <location>
        <begin position="338"/>
        <end position="351"/>
    </location>
</feature>
<feature type="helix" evidence="6">
    <location>
        <begin position="382"/>
        <end position="385"/>
    </location>
</feature>
<feature type="helix" evidence="6">
    <location>
        <begin position="430"/>
        <end position="433"/>
    </location>
</feature>
<feature type="helix" evidence="6">
    <location>
        <begin position="437"/>
        <end position="444"/>
    </location>
</feature>
<feature type="helix" evidence="6">
    <location>
        <begin position="456"/>
        <end position="467"/>
    </location>
</feature>
<feature type="helix" evidence="6">
    <location>
        <begin position="476"/>
        <end position="489"/>
    </location>
</feature>
<feature type="turn" evidence="6">
    <location>
        <begin position="497"/>
        <end position="500"/>
    </location>
</feature>
<feature type="helix" evidence="6">
    <location>
        <begin position="501"/>
        <end position="513"/>
    </location>
</feature>
<feature type="helix" evidence="6">
    <location>
        <begin position="515"/>
        <end position="517"/>
    </location>
</feature>
<feature type="helix" evidence="6">
    <location>
        <begin position="518"/>
        <end position="525"/>
    </location>
</feature>
<feature type="helix" evidence="6">
    <location>
        <begin position="532"/>
        <end position="550"/>
    </location>
</feature>
<feature type="helix" evidence="6">
    <location>
        <begin position="616"/>
        <end position="618"/>
    </location>
</feature>
<feature type="helix" evidence="6">
    <location>
        <begin position="619"/>
        <end position="632"/>
    </location>
</feature>
<feature type="helix" evidence="6">
    <location>
        <begin position="642"/>
        <end position="657"/>
    </location>
</feature>
<feature type="strand" evidence="6">
    <location>
        <begin position="659"/>
        <end position="663"/>
    </location>
</feature>
<feature type="helix" evidence="6">
    <location>
        <begin position="664"/>
        <end position="681"/>
    </location>
</feature>